<comment type="catalytic activity">
    <reaction evidence="2">
        <text>L-seryl-[protein] + ATP = O-phospho-L-seryl-[protein] + ADP + H(+)</text>
        <dbReference type="Rhea" id="RHEA:17989"/>
        <dbReference type="Rhea" id="RHEA-COMP:9863"/>
        <dbReference type="Rhea" id="RHEA-COMP:11604"/>
        <dbReference type="ChEBI" id="CHEBI:15378"/>
        <dbReference type="ChEBI" id="CHEBI:29999"/>
        <dbReference type="ChEBI" id="CHEBI:30616"/>
        <dbReference type="ChEBI" id="CHEBI:83421"/>
        <dbReference type="ChEBI" id="CHEBI:456216"/>
        <dbReference type="EC" id="2.7.11.1"/>
    </reaction>
</comment>
<comment type="catalytic activity">
    <reaction evidence="2">
        <text>L-threonyl-[protein] + ATP = O-phospho-L-threonyl-[protein] + ADP + H(+)</text>
        <dbReference type="Rhea" id="RHEA:46608"/>
        <dbReference type="Rhea" id="RHEA-COMP:11060"/>
        <dbReference type="Rhea" id="RHEA-COMP:11605"/>
        <dbReference type="ChEBI" id="CHEBI:15378"/>
        <dbReference type="ChEBI" id="CHEBI:30013"/>
        <dbReference type="ChEBI" id="CHEBI:30616"/>
        <dbReference type="ChEBI" id="CHEBI:61977"/>
        <dbReference type="ChEBI" id="CHEBI:456216"/>
        <dbReference type="EC" id="2.7.11.1"/>
    </reaction>
</comment>
<comment type="tissue specificity">
    <text evidence="7">In the egg, expressed predominantly in the animal hemisphere. This pattern of expression persists throughout the cleavage and blastula stages. At the gastrula stage, expression is restricted to the ectoderm. In later-stage embryos, expressed over the entire embryonic surface including the open neural plate at stage 15 and the neural tube at stage 22. In tadpoles, strongly expressed in the neural tube, motor neurons, brain regions and sensory organs (otic vesicle and eye). Also expressed in the perisomitic mesoderm, brachial arches and embryonic epidermis of tadpoles.</text>
</comment>
<comment type="developmental stage">
    <text evidence="7">Expressed both maternally and zygotically. Expressed throughout development.</text>
</comment>
<comment type="similarity">
    <text evidence="3">Belongs to the protein kinase superfamily. CAMK Ser/Thr protein kinase family. SNF1 subfamily.</text>
</comment>
<accession>Q6VZ17</accession>
<dbReference type="EC" id="2.7.11.1"/>
<dbReference type="EMBL" id="AY318878">
    <property type="protein sequence ID" value="AAQ85060.1"/>
    <property type="molecule type" value="mRNA"/>
</dbReference>
<dbReference type="SMR" id="Q6VZ17"/>
<dbReference type="AGR" id="Xenbase:XB-GENE-17345790"/>
<dbReference type="Xenbase" id="XB-GENE-17345790">
    <property type="gene designation" value="hunk.S"/>
</dbReference>
<dbReference type="Proteomes" id="UP000186698">
    <property type="component" value="Unplaced"/>
</dbReference>
<dbReference type="GO" id="GO:0005737">
    <property type="term" value="C:cytoplasm"/>
    <property type="evidence" value="ECO:0000318"/>
    <property type="project" value="GO_Central"/>
</dbReference>
<dbReference type="GO" id="GO:0005524">
    <property type="term" value="F:ATP binding"/>
    <property type="evidence" value="ECO:0007669"/>
    <property type="project" value="UniProtKB-KW"/>
</dbReference>
<dbReference type="GO" id="GO:0106310">
    <property type="term" value="F:protein serine kinase activity"/>
    <property type="evidence" value="ECO:0007669"/>
    <property type="project" value="RHEA"/>
</dbReference>
<dbReference type="GO" id="GO:0004674">
    <property type="term" value="F:protein serine/threonine kinase activity"/>
    <property type="evidence" value="ECO:0000318"/>
    <property type="project" value="GO_Central"/>
</dbReference>
<dbReference type="GO" id="GO:0035556">
    <property type="term" value="P:intracellular signal transduction"/>
    <property type="evidence" value="ECO:0000318"/>
    <property type="project" value="GO_Central"/>
</dbReference>
<dbReference type="FunFam" id="1.10.510.10:FF:000391">
    <property type="entry name" value="Hormonally up-regulated neu tumor-associated kinase"/>
    <property type="match status" value="1"/>
</dbReference>
<dbReference type="Gene3D" id="1.10.510.10">
    <property type="entry name" value="Transferase(Phosphotransferase) domain 1"/>
    <property type="match status" value="1"/>
</dbReference>
<dbReference type="InterPro" id="IPR011009">
    <property type="entry name" value="Kinase-like_dom_sf"/>
</dbReference>
<dbReference type="InterPro" id="IPR000719">
    <property type="entry name" value="Prot_kinase_dom"/>
</dbReference>
<dbReference type="InterPro" id="IPR008271">
    <property type="entry name" value="Ser/Thr_kinase_AS"/>
</dbReference>
<dbReference type="PANTHER" id="PTHR24346:SF80">
    <property type="entry name" value="HORMONALLY UP-REGULATED NEU TUMOR-ASSOCIATED KINASE"/>
    <property type="match status" value="1"/>
</dbReference>
<dbReference type="PANTHER" id="PTHR24346">
    <property type="entry name" value="MAP/MICROTUBULE AFFINITY-REGULATING KINASE"/>
    <property type="match status" value="1"/>
</dbReference>
<dbReference type="Pfam" id="PF00069">
    <property type="entry name" value="Pkinase"/>
    <property type="match status" value="1"/>
</dbReference>
<dbReference type="SMART" id="SM00220">
    <property type="entry name" value="S_TKc"/>
    <property type="match status" value="1"/>
</dbReference>
<dbReference type="SUPFAM" id="SSF56112">
    <property type="entry name" value="Protein kinase-like (PK-like)"/>
    <property type="match status" value="1"/>
</dbReference>
<dbReference type="PROSITE" id="PS50011">
    <property type="entry name" value="PROTEIN_KINASE_DOM"/>
    <property type="match status" value="1"/>
</dbReference>
<dbReference type="PROSITE" id="PS00108">
    <property type="entry name" value="PROTEIN_KINASE_ST"/>
    <property type="match status" value="1"/>
</dbReference>
<proteinExistence type="evidence at transcript level"/>
<sequence length="626" mass="71353">KVREGLHVGTGEKVAVKVIDKKKAKKDTYVTKNLRREGQIQQMIRHPNITQLLDILETENSYYLVMELCPGGNLMHKIYEKKRLEEHEARKYIRQLILAVEHLHRAGVVHRDLKIENLLLDENNNIKLIDFGLSNCAGILGYSDPFSTQCGSPAYAAPELLARKKYGPKVDVWSIGVNMYAMLTGTLPFTVEPFSLRALYQKMVDKDMNPLPTHISPAAISCLRSLLEPDPLKRPNIQQALANRWLNDNYHGKGHHTFPNRIHLEDLSQSVVLHMSEKLGYKHSDVINVILSNRACHTLAVYFLLNWKLEHYLVNMRKPDINDNVCHKNQFHQSEKYKMNKNSYEERRSKDLEKRGEQQQQRAIPRKLEKCSPSHRQSTCLTPQGHSSSKGPIKERRSSKSERESFGGLSPFHEVRITKTGCMNSCSLEYLEIQSPDPRTPKIMRRQDSHSQETVNVNMGSRIRETHLNVVRSFESVNREDQIESLSPNHQYRVLGSPMSFSPRHSSERTLSPIFHFDNTSPLKGHSNQASFTYDDKSSPSSPESMSPTSPHSPSCNNNISGNLGSPNCVRSRGRFPMMGIGQMLRKRNQVVSPKGEKPLETRMPPLHQMSPGYASFNSSDMNGFC</sequence>
<gene>
    <name type="primary">hunk-b</name>
    <name type="synonym">makv-b</name>
</gene>
<name>HUNKB_XENLA</name>
<reference evidence="8 9" key="1">
    <citation type="journal article" date="2004" name="Dev. Genes Evol.">
        <title>Cloning and developmental expression of MARK/Par-1/MELK-related protein kinase xMAK-V in Xenopus laevis.</title>
        <authorList>
            <person name="Ruzov A.S."/>
            <person name="Mertsalov I.B."/>
            <person name="Meehan R."/>
            <person name="Kiselev S.L."/>
            <person name="Buchman V.L."/>
            <person name="Korobko I.V."/>
        </authorList>
    </citation>
    <scope>NUCLEOTIDE SEQUENCE [MRNA]</scope>
    <scope>TISSUE SPECIFICITY</scope>
    <scope>DEVELOPMENTAL STAGE</scope>
</reference>
<feature type="chain" id="PRO_0000347329" description="Hormonally up-regulated neu tumor-associated kinase homolog B">
    <location>
        <begin position="1" status="less than"/>
        <end position="626"/>
    </location>
</feature>
<feature type="domain" description="Protein kinase" evidence="4">
    <location>
        <begin position="1" status="less than"/>
        <end position="246"/>
    </location>
</feature>
<feature type="region of interest" description="Disordered" evidence="6">
    <location>
        <begin position="336"/>
        <end position="407"/>
    </location>
</feature>
<feature type="region of interest" description="Disordered" evidence="6">
    <location>
        <begin position="477"/>
        <end position="574"/>
    </location>
</feature>
<feature type="region of interest" description="Disordered" evidence="6">
    <location>
        <begin position="590"/>
        <end position="615"/>
    </location>
</feature>
<feature type="compositionally biased region" description="Basic and acidic residues" evidence="6">
    <location>
        <begin position="336"/>
        <end position="357"/>
    </location>
</feature>
<feature type="compositionally biased region" description="Polar residues" evidence="6">
    <location>
        <begin position="374"/>
        <end position="390"/>
    </location>
</feature>
<feature type="compositionally biased region" description="Basic and acidic residues" evidence="6">
    <location>
        <begin position="392"/>
        <end position="405"/>
    </location>
</feature>
<feature type="compositionally biased region" description="Polar residues" evidence="6">
    <location>
        <begin position="518"/>
        <end position="532"/>
    </location>
</feature>
<feature type="compositionally biased region" description="Low complexity" evidence="6">
    <location>
        <begin position="539"/>
        <end position="555"/>
    </location>
</feature>
<feature type="compositionally biased region" description="Polar residues" evidence="6">
    <location>
        <begin position="556"/>
        <end position="566"/>
    </location>
</feature>
<feature type="active site" description="Proton acceptor" evidence="1 4 5">
    <location>
        <position position="112"/>
    </location>
</feature>
<feature type="binding site" evidence="1 4">
    <location>
        <begin position="1" status="less than"/>
        <end position="2"/>
    </location>
    <ligand>
        <name>ATP</name>
        <dbReference type="ChEBI" id="CHEBI:30616"/>
    </ligand>
</feature>
<feature type="binding site" evidence="1 4">
    <location>
        <position position="17"/>
    </location>
    <ligand>
        <name>ATP</name>
        <dbReference type="ChEBI" id="CHEBI:30616"/>
    </ligand>
</feature>
<feature type="non-terminal residue" evidence="9">
    <location>
        <position position="1"/>
    </location>
</feature>
<keyword id="KW-0067">ATP-binding</keyword>
<keyword id="KW-0418">Kinase</keyword>
<keyword id="KW-0547">Nucleotide-binding</keyword>
<keyword id="KW-1185">Reference proteome</keyword>
<keyword id="KW-0723">Serine/threonine-protein kinase</keyword>
<keyword id="KW-0808">Transferase</keyword>
<protein>
    <recommendedName>
        <fullName>Hormonally up-regulated neu tumor-associated kinase homolog B</fullName>
        <ecNumber>2.7.11.1</ecNumber>
    </recommendedName>
    <alternativeName>
        <fullName>Serine/threonine-protein kinase MAK-V B</fullName>
        <shortName>xMAK-V B</shortName>
    </alternativeName>
</protein>
<organism>
    <name type="scientific">Xenopus laevis</name>
    <name type="common">African clawed frog</name>
    <dbReference type="NCBI Taxonomy" id="8355"/>
    <lineage>
        <taxon>Eukaryota</taxon>
        <taxon>Metazoa</taxon>
        <taxon>Chordata</taxon>
        <taxon>Craniata</taxon>
        <taxon>Vertebrata</taxon>
        <taxon>Euteleostomi</taxon>
        <taxon>Amphibia</taxon>
        <taxon>Batrachia</taxon>
        <taxon>Anura</taxon>
        <taxon>Pipoidea</taxon>
        <taxon>Pipidae</taxon>
        <taxon>Xenopodinae</taxon>
        <taxon>Xenopus</taxon>
        <taxon>Xenopus</taxon>
    </lineage>
</organism>
<evidence type="ECO:0000250" key="1">
    <source>
        <dbReference type="UniProtKB" id="P00517"/>
    </source>
</evidence>
<evidence type="ECO:0000250" key="2">
    <source>
        <dbReference type="UniProtKB" id="P57058"/>
    </source>
</evidence>
<evidence type="ECO:0000255" key="3"/>
<evidence type="ECO:0000255" key="4">
    <source>
        <dbReference type="PROSITE-ProRule" id="PRU00159"/>
    </source>
</evidence>
<evidence type="ECO:0000255" key="5">
    <source>
        <dbReference type="PROSITE-ProRule" id="PRU10027"/>
    </source>
</evidence>
<evidence type="ECO:0000256" key="6">
    <source>
        <dbReference type="SAM" id="MobiDB-lite"/>
    </source>
</evidence>
<evidence type="ECO:0000269" key="7">
    <source>
    </source>
</evidence>
<evidence type="ECO:0000305" key="8"/>
<evidence type="ECO:0000312" key="9">
    <source>
        <dbReference type="EMBL" id="AAQ85060.1"/>
    </source>
</evidence>